<gene>
    <name evidence="1" type="primary">hisI</name>
    <name type="ordered locus">SGR_5464</name>
</gene>
<comment type="function">
    <text evidence="1">Catalyzes the hydrolysis of the adenine ring of phosphoribosyl-AMP.</text>
</comment>
<comment type="catalytic activity">
    <reaction evidence="1">
        <text>1-(5-phospho-beta-D-ribosyl)-5'-AMP + H2O = 1-(5-phospho-beta-D-ribosyl)-5-[(5-phospho-beta-D-ribosylamino)methylideneamino]imidazole-4-carboxamide</text>
        <dbReference type="Rhea" id="RHEA:20049"/>
        <dbReference type="ChEBI" id="CHEBI:15377"/>
        <dbReference type="ChEBI" id="CHEBI:58435"/>
        <dbReference type="ChEBI" id="CHEBI:59457"/>
        <dbReference type="EC" id="3.5.4.19"/>
    </reaction>
</comment>
<comment type="cofactor">
    <cofactor evidence="1">
        <name>Mg(2+)</name>
        <dbReference type="ChEBI" id="CHEBI:18420"/>
    </cofactor>
    <text evidence="1">Binds 1 Mg(2+) ion per subunit.</text>
</comment>
<comment type="cofactor">
    <cofactor evidence="1">
        <name>Zn(2+)</name>
        <dbReference type="ChEBI" id="CHEBI:29105"/>
    </cofactor>
    <text evidence="1">Binds 1 zinc ion per subunit.</text>
</comment>
<comment type="pathway">
    <text evidence="1">Amino-acid biosynthesis; L-histidine biosynthesis; L-histidine from 5-phospho-alpha-D-ribose 1-diphosphate: step 3/9.</text>
</comment>
<comment type="subunit">
    <text evidence="1">Homodimer.</text>
</comment>
<comment type="subcellular location">
    <subcellularLocation>
        <location evidence="1">Cytoplasm</location>
    </subcellularLocation>
</comment>
<comment type="similarity">
    <text evidence="1">Belongs to the PRA-CH family.</text>
</comment>
<dbReference type="EC" id="3.5.4.19" evidence="1"/>
<dbReference type="EMBL" id="AP009493">
    <property type="protein sequence ID" value="BAG22293.1"/>
    <property type="molecule type" value="Genomic_DNA"/>
</dbReference>
<dbReference type="RefSeq" id="WP_003969755.1">
    <property type="nucleotide sequence ID" value="NC_010572.1"/>
</dbReference>
<dbReference type="SMR" id="B1W0N3"/>
<dbReference type="KEGG" id="sgr:SGR_5464"/>
<dbReference type="eggNOG" id="COG0139">
    <property type="taxonomic scope" value="Bacteria"/>
</dbReference>
<dbReference type="HOGENOM" id="CLU_048577_5_1_11"/>
<dbReference type="UniPathway" id="UPA00031">
    <property type="reaction ID" value="UER00008"/>
</dbReference>
<dbReference type="Proteomes" id="UP000001685">
    <property type="component" value="Chromosome"/>
</dbReference>
<dbReference type="GO" id="GO:0005737">
    <property type="term" value="C:cytoplasm"/>
    <property type="evidence" value="ECO:0007669"/>
    <property type="project" value="UniProtKB-SubCell"/>
</dbReference>
<dbReference type="GO" id="GO:0000287">
    <property type="term" value="F:magnesium ion binding"/>
    <property type="evidence" value="ECO:0007669"/>
    <property type="project" value="UniProtKB-UniRule"/>
</dbReference>
<dbReference type="GO" id="GO:0004635">
    <property type="term" value="F:phosphoribosyl-AMP cyclohydrolase activity"/>
    <property type="evidence" value="ECO:0007669"/>
    <property type="project" value="UniProtKB-UniRule"/>
</dbReference>
<dbReference type="GO" id="GO:0008270">
    <property type="term" value="F:zinc ion binding"/>
    <property type="evidence" value="ECO:0007669"/>
    <property type="project" value="UniProtKB-UniRule"/>
</dbReference>
<dbReference type="GO" id="GO:0000105">
    <property type="term" value="P:L-histidine biosynthetic process"/>
    <property type="evidence" value="ECO:0007669"/>
    <property type="project" value="UniProtKB-UniRule"/>
</dbReference>
<dbReference type="FunFam" id="3.10.20.810:FF:000001">
    <property type="entry name" value="Histidine biosynthesis bifunctional protein HisIE"/>
    <property type="match status" value="1"/>
</dbReference>
<dbReference type="Gene3D" id="3.10.20.810">
    <property type="entry name" value="Phosphoribosyl-AMP cyclohydrolase"/>
    <property type="match status" value="1"/>
</dbReference>
<dbReference type="HAMAP" id="MF_01021">
    <property type="entry name" value="HisI"/>
    <property type="match status" value="1"/>
</dbReference>
<dbReference type="InterPro" id="IPR026660">
    <property type="entry name" value="PRA-CH"/>
</dbReference>
<dbReference type="InterPro" id="IPR002496">
    <property type="entry name" value="PRib_AMP_CycHydrolase_dom"/>
</dbReference>
<dbReference type="InterPro" id="IPR038019">
    <property type="entry name" value="PRib_AMP_CycHydrolase_sf"/>
</dbReference>
<dbReference type="NCBIfam" id="NF000768">
    <property type="entry name" value="PRK00051.1"/>
    <property type="match status" value="1"/>
</dbReference>
<dbReference type="PANTHER" id="PTHR42945">
    <property type="entry name" value="HISTIDINE BIOSYNTHESIS BIFUNCTIONAL PROTEIN"/>
    <property type="match status" value="1"/>
</dbReference>
<dbReference type="PANTHER" id="PTHR42945:SF11">
    <property type="entry name" value="PHOSPHORIBOSYL-AMP CYCLOHYDROLASE"/>
    <property type="match status" value="1"/>
</dbReference>
<dbReference type="Pfam" id="PF01502">
    <property type="entry name" value="PRA-CH"/>
    <property type="match status" value="1"/>
</dbReference>
<dbReference type="SUPFAM" id="SSF141734">
    <property type="entry name" value="HisI-like"/>
    <property type="match status" value="1"/>
</dbReference>
<keyword id="KW-0028">Amino-acid biosynthesis</keyword>
<keyword id="KW-0963">Cytoplasm</keyword>
<keyword id="KW-0368">Histidine biosynthesis</keyword>
<keyword id="KW-0378">Hydrolase</keyword>
<keyword id="KW-0460">Magnesium</keyword>
<keyword id="KW-0479">Metal-binding</keyword>
<keyword id="KW-0862">Zinc</keyword>
<protein>
    <recommendedName>
        <fullName evidence="1">Phosphoribosyl-AMP cyclohydrolase</fullName>
        <shortName evidence="1">PRA-CH</shortName>
        <ecNumber evidence="1">3.5.4.19</ecNumber>
    </recommendedName>
</protein>
<proteinExistence type="inferred from homology"/>
<accession>B1W0N3</accession>
<organism>
    <name type="scientific">Streptomyces griseus subsp. griseus (strain JCM 4626 / CBS 651.72 / NBRC 13350 / KCC S-0626 / ISP 5235)</name>
    <dbReference type="NCBI Taxonomy" id="455632"/>
    <lineage>
        <taxon>Bacteria</taxon>
        <taxon>Bacillati</taxon>
        <taxon>Actinomycetota</taxon>
        <taxon>Actinomycetes</taxon>
        <taxon>Kitasatosporales</taxon>
        <taxon>Streptomycetaceae</taxon>
        <taxon>Streptomyces</taxon>
    </lineage>
</organism>
<feature type="chain" id="PRO_1000135367" description="Phosphoribosyl-AMP cyclohydrolase">
    <location>
        <begin position="1"/>
        <end position="125"/>
    </location>
</feature>
<feature type="binding site" evidence="1">
    <location>
        <position position="91"/>
    </location>
    <ligand>
        <name>Mg(2+)</name>
        <dbReference type="ChEBI" id="CHEBI:18420"/>
    </ligand>
</feature>
<feature type="binding site" evidence="1">
    <location>
        <position position="92"/>
    </location>
    <ligand>
        <name>Zn(2+)</name>
        <dbReference type="ChEBI" id="CHEBI:29105"/>
        <note>ligand shared between dimeric partners</note>
    </ligand>
</feature>
<feature type="binding site" evidence="1">
    <location>
        <position position="93"/>
    </location>
    <ligand>
        <name>Mg(2+)</name>
        <dbReference type="ChEBI" id="CHEBI:18420"/>
    </ligand>
</feature>
<feature type="binding site" evidence="1">
    <location>
        <position position="95"/>
    </location>
    <ligand>
        <name>Mg(2+)</name>
        <dbReference type="ChEBI" id="CHEBI:18420"/>
    </ligand>
</feature>
<feature type="binding site" evidence="1">
    <location>
        <position position="108"/>
    </location>
    <ligand>
        <name>Zn(2+)</name>
        <dbReference type="ChEBI" id="CHEBI:29105"/>
        <note>ligand shared between dimeric partners</note>
    </ligand>
</feature>
<feature type="binding site" evidence="1">
    <location>
        <position position="115"/>
    </location>
    <ligand>
        <name>Zn(2+)</name>
        <dbReference type="ChEBI" id="CHEBI:29105"/>
        <note>ligand shared between dimeric partners</note>
    </ligand>
</feature>
<sequence length="125" mass="13376">MTSTPGATPPASSLDPAVAARLKRGADGLVPAIAQQYDTGEVLMLGWMDDEALHRTLTTGRCTYWSRSRQEYWVKGDTSGHVQHVKSVALDCDADTVLVKVDQTGAACHTGDRTCFDADALPLGK</sequence>
<reference key="1">
    <citation type="journal article" date="2008" name="J. Bacteriol.">
        <title>Genome sequence of the streptomycin-producing microorganism Streptomyces griseus IFO 13350.</title>
        <authorList>
            <person name="Ohnishi Y."/>
            <person name="Ishikawa J."/>
            <person name="Hara H."/>
            <person name="Suzuki H."/>
            <person name="Ikenoya M."/>
            <person name="Ikeda H."/>
            <person name="Yamashita A."/>
            <person name="Hattori M."/>
            <person name="Horinouchi S."/>
        </authorList>
    </citation>
    <scope>NUCLEOTIDE SEQUENCE [LARGE SCALE GENOMIC DNA]</scope>
    <source>
        <strain>JCM 4626 / CBS 651.72 / NBRC 13350 / KCC S-0626 / ISP 5235</strain>
    </source>
</reference>
<evidence type="ECO:0000255" key="1">
    <source>
        <dbReference type="HAMAP-Rule" id="MF_01021"/>
    </source>
</evidence>
<name>HIS3_STRGG</name>